<accession>B9MH67</accession>
<name>SYL_ACIET</name>
<sequence length="910" mass="101266">MQDKYNHTEVERAAHAHWNANDAYRVTEDQAKPKFYACSMLPYPSGKLHMGHVRNYTINDMLTRSLRMKGHNVLMPMGWDAFGLPAENAALKNGVPPAQWTYDNIAYMKKQMQAMGLAIDWSREVATCDPDYYKWNQWLFLKMLDKGIAYRKTQVVNWDPVDQTVLANEQVIDGRGWRTGALVEKREIPGYYLKITDYAQELLDHVQIGNEKATLTGWPDKVRLMQENWIGKSAGVRFAFPHDIRNAAGERIQDGKLYVFTTRADTIMGVTFCAVAPEHPLAQHAAASNAPLAAFIEECKKGGTTEAELALKEKEGMPTGLFVTHPLTGEQVEVWVGNYVLMSYGDGAVMGVPAHDERDFAFALKYQLPIKQVVLVDGETFDFHQWQDWYGDKERGVTINSDNFSGLSYQDAVAAVAHALAEKGLGELKTTWRLRDWGISRQRYWGTPIPIIHCESCGAVPVPEKDLPVVLPQDLVPDGSGNPLAKCEAFLKVDCPCCGKPARRETDTMDTFVDSSWYFMRYCDPKNRDAMVAGGTDYWMRDQKAATGGSGMDQYIGGIEHAILHLLYARFWTKVMRDLGLVKVDEPFTKLLTQGMVLNHIYSRRTAKGAKDYFWPHDVEHVYDEAGKIVGAKLKNPAESGDGLLPVGTPIDYEGVGTMSKSKNNGVDPQQLIEKYGADTARLYTMFTAPPELTLEWNDAAVEGSYRFLRRVWNFGVKLSAIDKDAALASVAGAASLKDVQFGKEAKALRLEIHTVLKQVDYDYQRMQYNTVVSGAMKMINALEDFKATDSAGAQVALIEGFGILLRVLYPATPHIAHVLWDELGYAGTLGDLLDAAWPQVAPDALVQDELELMLQVNGKLRGAIRVAASADKAAIEQAALASEDFQKFAEGKAPKKVIIVPGRLVNVVV</sequence>
<reference key="1">
    <citation type="submission" date="2009-01" db="EMBL/GenBank/DDBJ databases">
        <title>Complete sequence of Diaphorobacter sp. TPSY.</title>
        <authorList>
            <consortium name="US DOE Joint Genome Institute"/>
            <person name="Lucas S."/>
            <person name="Copeland A."/>
            <person name="Lapidus A."/>
            <person name="Glavina del Rio T."/>
            <person name="Tice H."/>
            <person name="Bruce D."/>
            <person name="Goodwin L."/>
            <person name="Pitluck S."/>
            <person name="Chertkov O."/>
            <person name="Brettin T."/>
            <person name="Detter J.C."/>
            <person name="Han C."/>
            <person name="Larimer F."/>
            <person name="Land M."/>
            <person name="Hauser L."/>
            <person name="Kyrpides N."/>
            <person name="Mikhailova N."/>
            <person name="Coates J.D."/>
        </authorList>
    </citation>
    <scope>NUCLEOTIDE SEQUENCE [LARGE SCALE GENOMIC DNA]</scope>
    <source>
        <strain>TPSY</strain>
    </source>
</reference>
<keyword id="KW-0030">Aminoacyl-tRNA synthetase</keyword>
<keyword id="KW-0067">ATP-binding</keyword>
<keyword id="KW-0963">Cytoplasm</keyword>
<keyword id="KW-0436">Ligase</keyword>
<keyword id="KW-0547">Nucleotide-binding</keyword>
<keyword id="KW-0648">Protein biosynthesis</keyword>
<keyword id="KW-1185">Reference proteome</keyword>
<proteinExistence type="inferred from homology"/>
<gene>
    <name evidence="1" type="primary">leuS</name>
    <name type="ordered locus">Dtpsy_3266</name>
</gene>
<evidence type="ECO:0000255" key="1">
    <source>
        <dbReference type="HAMAP-Rule" id="MF_00049"/>
    </source>
</evidence>
<organism>
    <name type="scientific">Acidovorax ebreus (strain TPSY)</name>
    <name type="common">Diaphorobacter sp. (strain TPSY)</name>
    <dbReference type="NCBI Taxonomy" id="535289"/>
    <lineage>
        <taxon>Bacteria</taxon>
        <taxon>Pseudomonadati</taxon>
        <taxon>Pseudomonadota</taxon>
        <taxon>Betaproteobacteria</taxon>
        <taxon>Burkholderiales</taxon>
        <taxon>Comamonadaceae</taxon>
        <taxon>Diaphorobacter</taxon>
    </lineage>
</organism>
<comment type="catalytic activity">
    <reaction evidence="1">
        <text>tRNA(Leu) + L-leucine + ATP = L-leucyl-tRNA(Leu) + AMP + diphosphate</text>
        <dbReference type="Rhea" id="RHEA:11688"/>
        <dbReference type="Rhea" id="RHEA-COMP:9613"/>
        <dbReference type="Rhea" id="RHEA-COMP:9622"/>
        <dbReference type="ChEBI" id="CHEBI:30616"/>
        <dbReference type="ChEBI" id="CHEBI:33019"/>
        <dbReference type="ChEBI" id="CHEBI:57427"/>
        <dbReference type="ChEBI" id="CHEBI:78442"/>
        <dbReference type="ChEBI" id="CHEBI:78494"/>
        <dbReference type="ChEBI" id="CHEBI:456215"/>
        <dbReference type="EC" id="6.1.1.4"/>
    </reaction>
</comment>
<comment type="subcellular location">
    <subcellularLocation>
        <location evidence="1">Cytoplasm</location>
    </subcellularLocation>
</comment>
<comment type="similarity">
    <text evidence="1">Belongs to the class-I aminoacyl-tRNA synthetase family.</text>
</comment>
<protein>
    <recommendedName>
        <fullName evidence="1">Leucine--tRNA ligase</fullName>
        <ecNumber evidence="1">6.1.1.4</ecNumber>
    </recommendedName>
    <alternativeName>
        <fullName evidence="1">Leucyl-tRNA synthetase</fullName>
        <shortName evidence="1">LeuRS</shortName>
    </alternativeName>
</protein>
<dbReference type="EC" id="6.1.1.4" evidence="1"/>
<dbReference type="EMBL" id="CP001392">
    <property type="protein sequence ID" value="ACM34695.1"/>
    <property type="molecule type" value="Genomic_DNA"/>
</dbReference>
<dbReference type="RefSeq" id="WP_015914504.1">
    <property type="nucleotide sequence ID" value="NC_011992.1"/>
</dbReference>
<dbReference type="SMR" id="B9MH67"/>
<dbReference type="KEGG" id="dia:Dtpsy_3266"/>
<dbReference type="eggNOG" id="COG0495">
    <property type="taxonomic scope" value="Bacteria"/>
</dbReference>
<dbReference type="HOGENOM" id="CLU_004427_0_0_4"/>
<dbReference type="Proteomes" id="UP000000450">
    <property type="component" value="Chromosome"/>
</dbReference>
<dbReference type="GO" id="GO:0005829">
    <property type="term" value="C:cytosol"/>
    <property type="evidence" value="ECO:0007669"/>
    <property type="project" value="TreeGrafter"/>
</dbReference>
<dbReference type="GO" id="GO:0002161">
    <property type="term" value="F:aminoacyl-tRNA deacylase activity"/>
    <property type="evidence" value="ECO:0007669"/>
    <property type="project" value="InterPro"/>
</dbReference>
<dbReference type="GO" id="GO:0005524">
    <property type="term" value="F:ATP binding"/>
    <property type="evidence" value="ECO:0007669"/>
    <property type="project" value="UniProtKB-UniRule"/>
</dbReference>
<dbReference type="GO" id="GO:0004823">
    <property type="term" value="F:leucine-tRNA ligase activity"/>
    <property type="evidence" value="ECO:0007669"/>
    <property type="project" value="UniProtKB-UniRule"/>
</dbReference>
<dbReference type="GO" id="GO:0006429">
    <property type="term" value="P:leucyl-tRNA aminoacylation"/>
    <property type="evidence" value="ECO:0007669"/>
    <property type="project" value="UniProtKB-UniRule"/>
</dbReference>
<dbReference type="CDD" id="cd07958">
    <property type="entry name" value="Anticodon_Ia_Leu_BEm"/>
    <property type="match status" value="1"/>
</dbReference>
<dbReference type="CDD" id="cd00812">
    <property type="entry name" value="LeuRS_core"/>
    <property type="match status" value="1"/>
</dbReference>
<dbReference type="FunFam" id="1.10.730.10:FF:000003">
    <property type="entry name" value="Leucine--tRNA ligase"/>
    <property type="match status" value="1"/>
</dbReference>
<dbReference type="FunFam" id="3.10.20.590:FF:000001">
    <property type="entry name" value="Leucine--tRNA ligase"/>
    <property type="match status" value="1"/>
</dbReference>
<dbReference type="FunFam" id="3.40.50.620:FF:000003">
    <property type="entry name" value="Leucine--tRNA ligase"/>
    <property type="match status" value="1"/>
</dbReference>
<dbReference type="FunFam" id="3.40.50.620:FF:000056">
    <property type="entry name" value="Leucine--tRNA ligase"/>
    <property type="match status" value="1"/>
</dbReference>
<dbReference type="FunFam" id="3.90.740.10:FF:000012">
    <property type="entry name" value="Leucine--tRNA ligase"/>
    <property type="match status" value="1"/>
</dbReference>
<dbReference type="Gene3D" id="2.20.28.290">
    <property type="match status" value="1"/>
</dbReference>
<dbReference type="Gene3D" id="3.10.20.590">
    <property type="match status" value="1"/>
</dbReference>
<dbReference type="Gene3D" id="3.40.50.620">
    <property type="entry name" value="HUPs"/>
    <property type="match status" value="2"/>
</dbReference>
<dbReference type="Gene3D" id="1.10.730.10">
    <property type="entry name" value="Isoleucyl-tRNA Synthetase, Domain 1"/>
    <property type="match status" value="1"/>
</dbReference>
<dbReference type="HAMAP" id="MF_00049_B">
    <property type="entry name" value="Leu_tRNA_synth_B"/>
    <property type="match status" value="1"/>
</dbReference>
<dbReference type="InterPro" id="IPR001412">
    <property type="entry name" value="aa-tRNA-synth_I_CS"/>
</dbReference>
<dbReference type="InterPro" id="IPR002300">
    <property type="entry name" value="aa-tRNA-synth_Ia"/>
</dbReference>
<dbReference type="InterPro" id="IPR002302">
    <property type="entry name" value="Leu-tRNA-ligase"/>
</dbReference>
<dbReference type="InterPro" id="IPR025709">
    <property type="entry name" value="Leu_tRNA-synth_edit"/>
</dbReference>
<dbReference type="InterPro" id="IPR013155">
    <property type="entry name" value="M/V/L/I-tRNA-synth_anticd-bd"/>
</dbReference>
<dbReference type="InterPro" id="IPR015413">
    <property type="entry name" value="Methionyl/Leucyl_tRNA_Synth"/>
</dbReference>
<dbReference type="InterPro" id="IPR014729">
    <property type="entry name" value="Rossmann-like_a/b/a_fold"/>
</dbReference>
<dbReference type="InterPro" id="IPR009080">
    <property type="entry name" value="tRNAsynth_Ia_anticodon-bd"/>
</dbReference>
<dbReference type="InterPro" id="IPR009008">
    <property type="entry name" value="Val/Leu/Ile-tRNA-synth_edit"/>
</dbReference>
<dbReference type="NCBIfam" id="TIGR00396">
    <property type="entry name" value="leuS_bact"/>
    <property type="match status" value="1"/>
</dbReference>
<dbReference type="PANTHER" id="PTHR43740:SF2">
    <property type="entry name" value="LEUCINE--TRNA LIGASE, MITOCHONDRIAL"/>
    <property type="match status" value="1"/>
</dbReference>
<dbReference type="PANTHER" id="PTHR43740">
    <property type="entry name" value="LEUCYL-TRNA SYNTHETASE"/>
    <property type="match status" value="1"/>
</dbReference>
<dbReference type="Pfam" id="PF08264">
    <property type="entry name" value="Anticodon_1"/>
    <property type="match status" value="1"/>
</dbReference>
<dbReference type="Pfam" id="PF00133">
    <property type="entry name" value="tRNA-synt_1"/>
    <property type="match status" value="1"/>
</dbReference>
<dbReference type="Pfam" id="PF13603">
    <property type="entry name" value="tRNA-synt_1_2"/>
    <property type="match status" value="1"/>
</dbReference>
<dbReference type="Pfam" id="PF09334">
    <property type="entry name" value="tRNA-synt_1g"/>
    <property type="match status" value="1"/>
</dbReference>
<dbReference type="PRINTS" id="PR00985">
    <property type="entry name" value="TRNASYNTHLEU"/>
</dbReference>
<dbReference type="SUPFAM" id="SSF47323">
    <property type="entry name" value="Anticodon-binding domain of a subclass of class I aminoacyl-tRNA synthetases"/>
    <property type="match status" value="1"/>
</dbReference>
<dbReference type="SUPFAM" id="SSF52374">
    <property type="entry name" value="Nucleotidylyl transferase"/>
    <property type="match status" value="1"/>
</dbReference>
<dbReference type="SUPFAM" id="SSF50677">
    <property type="entry name" value="ValRS/IleRS/LeuRS editing domain"/>
    <property type="match status" value="1"/>
</dbReference>
<dbReference type="PROSITE" id="PS00178">
    <property type="entry name" value="AA_TRNA_LIGASE_I"/>
    <property type="match status" value="1"/>
</dbReference>
<feature type="chain" id="PRO_1000199198" description="Leucine--tRNA ligase">
    <location>
        <begin position="1"/>
        <end position="910"/>
    </location>
</feature>
<feature type="short sequence motif" description="'HIGH' region">
    <location>
        <begin position="42"/>
        <end position="52"/>
    </location>
</feature>
<feature type="short sequence motif" description="'KMSKS' region">
    <location>
        <begin position="658"/>
        <end position="662"/>
    </location>
</feature>
<feature type="binding site" evidence="1">
    <location>
        <position position="661"/>
    </location>
    <ligand>
        <name>ATP</name>
        <dbReference type="ChEBI" id="CHEBI:30616"/>
    </ligand>
</feature>